<keyword id="KW-0067">ATP-binding</keyword>
<keyword id="KW-0143">Chaperone</keyword>
<keyword id="KW-0963">Cytoplasm</keyword>
<keyword id="KW-0547">Nucleotide-binding</keyword>
<keyword id="KW-0346">Stress response</keyword>
<protein>
    <recommendedName>
        <fullName evidence="1">Chaperone protein HtpG</fullName>
    </recommendedName>
    <alternativeName>
        <fullName evidence="1">Heat shock protein HtpG</fullName>
    </alternativeName>
    <alternativeName>
        <fullName evidence="1">High temperature protein G</fullName>
    </alternativeName>
</protein>
<feature type="chain" id="PRO_0000258507" description="Chaperone protein HtpG">
    <location>
        <begin position="1"/>
        <end position="623"/>
    </location>
</feature>
<feature type="region of interest" description="A; substrate-binding" evidence="1">
    <location>
        <begin position="1"/>
        <end position="341"/>
    </location>
</feature>
<feature type="region of interest" description="B" evidence="1">
    <location>
        <begin position="342"/>
        <end position="549"/>
    </location>
</feature>
<feature type="region of interest" description="C" evidence="1">
    <location>
        <begin position="550"/>
        <end position="623"/>
    </location>
</feature>
<proteinExistence type="inferred from homology"/>
<evidence type="ECO:0000255" key="1">
    <source>
        <dbReference type="HAMAP-Rule" id="MF_00505"/>
    </source>
</evidence>
<reference key="1">
    <citation type="journal article" date="2006" name="Genome Res.">
        <title>Skewed genomic variability in strains of the toxigenic bacterial pathogen, Clostridium perfringens.</title>
        <authorList>
            <person name="Myers G.S.A."/>
            <person name="Rasko D.A."/>
            <person name="Cheung J.K."/>
            <person name="Ravel J."/>
            <person name="Seshadri R."/>
            <person name="DeBoy R.T."/>
            <person name="Ren Q."/>
            <person name="Varga J."/>
            <person name="Awad M.M."/>
            <person name="Brinkac L.M."/>
            <person name="Daugherty S.C."/>
            <person name="Haft D.H."/>
            <person name="Dodson R.J."/>
            <person name="Madupu R."/>
            <person name="Nelson W.C."/>
            <person name="Rosovitz M.J."/>
            <person name="Sullivan S.A."/>
            <person name="Khouri H."/>
            <person name="Dimitrov G.I."/>
            <person name="Watkins K.L."/>
            <person name="Mulligan S."/>
            <person name="Benton J."/>
            <person name="Radune D."/>
            <person name="Fisher D.J."/>
            <person name="Atkins H.S."/>
            <person name="Hiscox T."/>
            <person name="Jost B.H."/>
            <person name="Billington S.J."/>
            <person name="Songer J.G."/>
            <person name="McClane B.A."/>
            <person name="Titball R.W."/>
            <person name="Rood J.I."/>
            <person name="Melville S.B."/>
            <person name="Paulsen I.T."/>
        </authorList>
    </citation>
    <scope>NUCLEOTIDE SEQUENCE [LARGE SCALE GENOMIC DNA]</scope>
    <source>
        <strain>ATCC 13124 / DSM 756 / JCM 1290 / NCIMB 6125 / NCTC 8237 / S 107 / Type A</strain>
    </source>
</reference>
<sequence>MEKREFKAESKRLLDIVINSIYTNREIFLRELISNASDAIDKVYYKTLGDSSLTFNKDDYYIKIKPNKEERTLTISDKGIGMTEKELDENLGVIAKSGSLQFKKENEIKDGFDIIGQFGVGFYSGFLVADKITVITKAFGADKAYKWESDGVDGYTISEAEKDSFGTDIILHLKANDEDENYDEFLEEYKLKSLIKKYSDFIRYPIKLDVTKSRVKEGTENEHEEYVEEETVNSMVPLWRRNKNELTDDDYNNFYVEKRFGFDKPLRHMHISVDGMISYNSILYIPENIPYDYYTKEYEKGLELYSNGVLIMEKCSELLPDYFGFVKGIVDSQDLSLNISREMLQHDRQLSRIAKNIKTKIKNELESMMKNDRESYEKFYKSFGRQLKYGVYDDFGMNKDELKDLLMFYSSKEKKMVSLAEYVERMAEDQKYIYYAVGESNERIEKMPQTEMVLDKGYEILYFTEDVDEFAIKMLMNYKEKEFKSVSSGDLGIESEEENKKENEENKGIFEAMKEALGEKISAVKASSRLKNYPVCLSSEGEVSIEMEKILSAMPNNQGVKAQKVLEVNTNHEVFNSLKDALENDKDKFNLYTKLLYNQALLVEGLSIEDPVDFTNDICKLMK</sequence>
<dbReference type="EMBL" id="CP000246">
    <property type="protein sequence ID" value="ABG84623.1"/>
    <property type="molecule type" value="Genomic_DNA"/>
</dbReference>
<dbReference type="RefSeq" id="WP_003455303.1">
    <property type="nucleotide sequence ID" value="NC_008261.1"/>
</dbReference>
<dbReference type="SMR" id="Q0TU16"/>
<dbReference type="STRING" id="195103.CPF_0417"/>
<dbReference type="PaxDb" id="195103-CPF_0417"/>
<dbReference type="GeneID" id="93003237"/>
<dbReference type="KEGG" id="cpf:CPF_0417"/>
<dbReference type="eggNOG" id="COG0326">
    <property type="taxonomic scope" value="Bacteria"/>
</dbReference>
<dbReference type="HOGENOM" id="CLU_006684_3_0_9"/>
<dbReference type="Proteomes" id="UP000001823">
    <property type="component" value="Chromosome"/>
</dbReference>
<dbReference type="GO" id="GO:0005737">
    <property type="term" value="C:cytoplasm"/>
    <property type="evidence" value="ECO:0007669"/>
    <property type="project" value="UniProtKB-SubCell"/>
</dbReference>
<dbReference type="GO" id="GO:0005524">
    <property type="term" value="F:ATP binding"/>
    <property type="evidence" value="ECO:0007669"/>
    <property type="project" value="UniProtKB-UniRule"/>
</dbReference>
<dbReference type="GO" id="GO:0016887">
    <property type="term" value="F:ATP hydrolysis activity"/>
    <property type="evidence" value="ECO:0007669"/>
    <property type="project" value="InterPro"/>
</dbReference>
<dbReference type="GO" id="GO:0140662">
    <property type="term" value="F:ATP-dependent protein folding chaperone"/>
    <property type="evidence" value="ECO:0007669"/>
    <property type="project" value="InterPro"/>
</dbReference>
<dbReference type="GO" id="GO:0051082">
    <property type="term" value="F:unfolded protein binding"/>
    <property type="evidence" value="ECO:0007669"/>
    <property type="project" value="UniProtKB-UniRule"/>
</dbReference>
<dbReference type="CDD" id="cd16927">
    <property type="entry name" value="HATPase_Hsp90-like"/>
    <property type="match status" value="1"/>
</dbReference>
<dbReference type="FunFam" id="1.20.120.790:FF:000006">
    <property type="entry name" value="Chaperone protein HtpG"/>
    <property type="match status" value="1"/>
</dbReference>
<dbReference type="FunFam" id="3.40.50.11260:FF:000008">
    <property type="entry name" value="Chaperone protein HtpG"/>
    <property type="match status" value="1"/>
</dbReference>
<dbReference type="FunFam" id="3.30.565.10:FF:000357">
    <property type="entry name" value="Heat shock protein HSP 90-beta"/>
    <property type="match status" value="1"/>
</dbReference>
<dbReference type="FunFam" id="3.30.230.80:FF:000002">
    <property type="entry name" value="Molecular chaperone HtpG"/>
    <property type="match status" value="1"/>
</dbReference>
<dbReference type="Gene3D" id="3.30.230.80">
    <property type="match status" value="1"/>
</dbReference>
<dbReference type="Gene3D" id="3.40.50.11260">
    <property type="match status" value="1"/>
</dbReference>
<dbReference type="Gene3D" id="1.20.120.790">
    <property type="entry name" value="Heat shock protein 90, C-terminal domain"/>
    <property type="match status" value="1"/>
</dbReference>
<dbReference type="Gene3D" id="3.30.565.10">
    <property type="entry name" value="Histidine kinase-like ATPase, C-terminal domain"/>
    <property type="match status" value="1"/>
</dbReference>
<dbReference type="HAMAP" id="MF_00505">
    <property type="entry name" value="HSP90"/>
    <property type="match status" value="1"/>
</dbReference>
<dbReference type="InterPro" id="IPR036890">
    <property type="entry name" value="HATPase_C_sf"/>
</dbReference>
<dbReference type="InterPro" id="IPR019805">
    <property type="entry name" value="Heat_shock_protein_90_CS"/>
</dbReference>
<dbReference type="InterPro" id="IPR037196">
    <property type="entry name" value="HSP90_C"/>
</dbReference>
<dbReference type="InterPro" id="IPR001404">
    <property type="entry name" value="Hsp90_fam"/>
</dbReference>
<dbReference type="InterPro" id="IPR020575">
    <property type="entry name" value="Hsp90_N"/>
</dbReference>
<dbReference type="InterPro" id="IPR020568">
    <property type="entry name" value="Ribosomal_Su5_D2-typ_SF"/>
</dbReference>
<dbReference type="NCBIfam" id="NF003555">
    <property type="entry name" value="PRK05218.1"/>
    <property type="match status" value="1"/>
</dbReference>
<dbReference type="PANTHER" id="PTHR11528">
    <property type="entry name" value="HEAT SHOCK PROTEIN 90 FAMILY MEMBER"/>
    <property type="match status" value="1"/>
</dbReference>
<dbReference type="Pfam" id="PF13589">
    <property type="entry name" value="HATPase_c_3"/>
    <property type="match status" value="1"/>
</dbReference>
<dbReference type="Pfam" id="PF00183">
    <property type="entry name" value="HSP90"/>
    <property type="match status" value="2"/>
</dbReference>
<dbReference type="PIRSF" id="PIRSF002583">
    <property type="entry name" value="Hsp90"/>
    <property type="match status" value="1"/>
</dbReference>
<dbReference type="PRINTS" id="PR00775">
    <property type="entry name" value="HEATSHOCK90"/>
</dbReference>
<dbReference type="SUPFAM" id="SSF55874">
    <property type="entry name" value="ATPase domain of HSP90 chaperone/DNA topoisomerase II/histidine kinase"/>
    <property type="match status" value="1"/>
</dbReference>
<dbReference type="SUPFAM" id="SSF110942">
    <property type="entry name" value="HSP90 C-terminal domain"/>
    <property type="match status" value="1"/>
</dbReference>
<dbReference type="SUPFAM" id="SSF54211">
    <property type="entry name" value="Ribosomal protein S5 domain 2-like"/>
    <property type="match status" value="1"/>
</dbReference>
<dbReference type="PROSITE" id="PS00298">
    <property type="entry name" value="HSP90"/>
    <property type="match status" value="1"/>
</dbReference>
<organism>
    <name type="scientific">Clostridium perfringens (strain ATCC 13124 / DSM 756 / JCM 1290 / NCIMB 6125 / NCTC 8237 / Type A)</name>
    <dbReference type="NCBI Taxonomy" id="195103"/>
    <lineage>
        <taxon>Bacteria</taxon>
        <taxon>Bacillati</taxon>
        <taxon>Bacillota</taxon>
        <taxon>Clostridia</taxon>
        <taxon>Eubacteriales</taxon>
        <taxon>Clostridiaceae</taxon>
        <taxon>Clostridium</taxon>
    </lineage>
</organism>
<gene>
    <name evidence="1" type="primary">htpG</name>
    <name type="ordered locus">CPF_0417</name>
</gene>
<accession>Q0TU16</accession>
<name>HTPG_CLOP1</name>
<comment type="function">
    <text evidence="1">Molecular chaperone. Has ATPase activity.</text>
</comment>
<comment type="subunit">
    <text evidence="1">Homodimer.</text>
</comment>
<comment type="subcellular location">
    <subcellularLocation>
        <location evidence="1">Cytoplasm</location>
    </subcellularLocation>
</comment>
<comment type="similarity">
    <text evidence="1">Belongs to the heat shock protein 90 family.</text>
</comment>